<sequence>MRHRKSGRHLSRTSSHRKAMFQNMAVSLFEHELIKTTLPKAKELRRVAEPLITLAKEDSVANRRLAFDRTRSKEIVGKLFNDLGKRYATRQGGYLRILKCGFRTGDNAPMAYVELVDRPVGGSVEAAE</sequence>
<comment type="subunit">
    <text evidence="1">Part of the 50S ribosomal subunit. Contacts protein L32.</text>
</comment>
<comment type="similarity">
    <text evidence="1">Belongs to the bacterial ribosomal protein bL17 family.</text>
</comment>
<accession>Q889U5</accession>
<feature type="chain" id="PRO_0000267919" description="Large ribosomal subunit protein bL17">
    <location>
        <begin position="1"/>
        <end position="128"/>
    </location>
</feature>
<protein>
    <recommendedName>
        <fullName evidence="1">Large ribosomal subunit protein bL17</fullName>
    </recommendedName>
    <alternativeName>
        <fullName evidence="2">50S ribosomal protein L17</fullName>
    </alternativeName>
</protein>
<keyword id="KW-1185">Reference proteome</keyword>
<keyword id="KW-0687">Ribonucleoprotein</keyword>
<keyword id="KW-0689">Ribosomal protein</keyword>
<gene>
    <name evidence="1" type="primary">rplQ</name>
    <name type="ordered locus">PSPTO_0652</name>
</gene>
<evidence type="ECO:0000255" key="1">
    <source>
        <dbReference type="HAMAP-Rule" id="MF_01368"/>
    </source>
</evidence>
<evidence type="ECO:0000305" key="2"/>
<reference key="1">
    <citation type="journal article" date="2003" name="Proc. Natl. Acad. Sci. U.S.A.">
        <title>The complete genome sequence of the Arabidopsis and tomato pathogen Pseudomonas syringae pv. tomato DC3000.</title>
        <authorList>
            <person name="Buell C.R."/>
            <person name="Joardar V."/>
            <person name="Lindeberg M."/>
            <person name="Selengut J."/>
            <person name="Paulsen I.T."/>
            <person name="Gwinn M.L."/>
            <person name="Dodson R.J."/>
            <person name="DeBoy R.T."/>
            <person name="Durkin A.S."/>
            <person name="Kolonay J.F."/>
            <person name="Madupu R."/>
            <person name="Daugherty S.C."/>
            <person name="Brinkac L.M."/>
            <person name="Beanan M.J."/>
            <person name="Haft D.H."/>
            <person name="Nelson W.C."/>
            <person name="Davidsen T.M."/>
            <person name="Zafar N."/>
            <person name="Zhou L."/>
            <person name="Liu J."/>
            <person name="Yuan Q."/>
            <person name="Khouri H.M."/>
            <person name="Fedorova N.B."/>
            <person name="Tran B."/>
            <person name="Russell D."/>
            <person name="Berry K.J."/>
            <person name="Utterback T.R."/>
            <person name="Van Aken S.E."/>
            <person name="Feldblyum T.V."/>
            <person name="D'Ascenzo M."/>
            <person name="Deng W.-L."/>
            <person name="Ramos A.R."/>
            <person name="Alfano J.R."/>
            <person name="Cartinhour S."/>
            <person name="Chatterjee A.K."/>
            <person name="Delaney T.P."/>
            <person name="Lazarowitz S.G."/>
            <person name="Martin G.B."/>
            <person name="Schneider D.J."/>
            <person name="Tang X."/>
            <person name="Bender C.L."/>
            <person name="White O."/>
            <person name="Fraser C.M."/>
            <person name="Collmer A."/>
        </authorList>
    </citation>
    <scope>NUCLEOTIDE SEQUENCE [LARGE SCALE GENOMIC DNA]</scope>
    <source>
        <strain>ATCC BAA-871 / DC3000</strain>
    </source>
</reference>
<proteinExistence type="inferred from homology"/>
<name>RL17_PSESM</name>
<organism>
    <name type="scientific">Pseudomonas syringae pv. tomato (strain ATCC BAA-871 / DC3000)</name>
    <dbReference type="NCBI Taxonomy" id="223283"/>
    <lineage>
        <taxon>Bacteria</taxon>
        <taxon>Pseudomonadati</taxon>
        <taxon>Pseudomonadota</taxon>
        <taxon>Gammaproteobacteria</taxon>
        <taxon>Pseudomonadales</taxon>
        <taxon>Pseudomonadaceae</taxon>
        <taxon>Pseudomonas</taxon>
    </lineage>
</organism>
<dbReference type="EMBL" id="AE016853">
    <property type="protein sequence ID" value="AAO54194.1"/>
    <property type="molecule type" value="Genomic_DNA"/>
</dbReference>
<dbReference type="RefSeq" id="NP_790499.1">
    <property type="nucleotide sequence ID" value="NC_004578.1"/>
</dbReference>
<dbReference type="RefSeq" id="WP_004397026.1">
    <property type="nucleotide sequence ID" value="NC_004578.1"/>
</dbReference>
<dbReference type="SMR" id="Q889U5"/>
<dbReference type="STRING" id="223283.PSPTO_0652"/>
<dbReference type="GeneID" id="61790251"/>
<dbReference type="KEGG" id="pst:PSPTO_0652"/>
<dbReference type="PATRIC" id="fig|223283.9.peg.658"/>
<dbReference type="eggNOG" id="COG0203">
    <property type="taxonomic scope" value="Bacteria"/>
</dbReference>
<dbReference type="HOGENOM" id="CLU_074407_2_0_6"/>
<dbReference type="OrthoDB" id="9809073at2"/>
<dbReference type="PhylomeDB" id="Q889U5"/>
<dbReference type="Proteomes" id="UP000002515">
    <property type="component" value="Chromosome"/>
</dbReference>
<dbReference type="GO" id="GO:0022625">
    <property type="term" value="C:cytosolic large ribosomal subunit"/>
    <property type="evidence" value="ECO:0007669"/>
    <property type="project" value="TreeGrafter"/>
</dbReference>
<dbReference type="GO" id="GO:0003735">
    <property type="term" value="F:structural constituent of ribosome"/>
    <property type="evidence" value="ECO:0007669"/>
    <property type="project" value="InterPro"/>
</dbReference>
<dbReference type="GO" id="GO:0006412">
    <property type="term" value="P:translation"/>
    <property type="evidence" value="ECO:0007669"/>
    <property type="project" value="UniProtKB-UniRule"/>
</dbReference>
<dbReference type="FunFam" id="3.90.1030.10:FF:000001">
    <property type="entry name" value="50S ribosomal protein L17"/>
    <property type="match status" value="1"/>
</dbReference>
<dbReference type="Gene3D" id="3.90.1030.10">
    <property type="entry name" value="Ribosomal protein L17"/>
    <property type="match status" value="1"/>
</dbReference>
<dbReference type="HAMAP" id="MF_01368">
    <property type="entry name" value="Ribosomal_bL17"/>
    <property type="match status" value="1"/>
</dbReference>
<dbReference type="InterPro" id="IPR000456">
    <property type="entry name" value="Ribosomal_bL17"/>
</dbReference>
<dbReference type="InterPro" id="IPR047859">
    <property type="entry name" value="Ribosomal_bL17_CS"/>
</dbReference>
<dbReference type="InterPro" id="IPR036373">
    <property type="entry name" value="Ribosomal_bL17_sf"/>
</dbReference>
<dbReference type="NCBIfam" id="TIGR00059">
    <property type="entry name" value="L17"/>
    <property type="match status" value="1"/>
</dbReference>
<dbReference type="PANTHER" id="PTHR14413:SF16">
    <property type="entry name" value="LARGE RIBOSOMAL SUBUNIT PROTEIN BL17M"/>
    <property type="match status" value="1"/>
</dbReference>
<dbReference type="PANTHER" id="PTHR14413">
    <property type="entry name" value="RIBOSOMAL PROTEIN L17"/>
    <property type="match status" value="1"/>
</dbReference>
<dbReference type="Pfam" id="PF01196">
    <property type="entry name" value="Ribosomal_L17"/>
    <property type="match status" value="1"/>
</dbReference>
<dbReference type="SUPFAM" id="SSF64263">
    <property type="entry name" value="Prokaryotic ribosomal protein L17"/>
    <property type="match status" value="1"/>
</dbReference>
<dbReference type="PROSITE" id="PS01167">
    <property type="entry name" value="RIBOSOMAL_L17"/>
    <property type="match status" value="1"/>
</dbReference>